<feature type="chain" id="PRO_0000079070" description="Nucleoprotein">
    <location>
        <begin position="1"/>
        <end position="498"/>
    </location>
</feature>
<feature type="region of interest" description="Disordered" evidence="2">
    <location>
        <begin position="1"/>
        <end position="21"/>
    </location>
</feature>
<feature type="short sequence motif" description="Unconventional nuclear localization signal" evidence="1">
    <location>
        <begin position="1"/>
        <end position="18"/>
    </location>
</feature>
<feature type="short sequence motif" description="Bipartite nuclear localization signal" evidence="1">
    <location>
        <begin position="198"/>
        <end position="216"/>
    </location>
</feature>
<feature type="compositionally biased region" description="Basic and acidic residues" evidence="2">
    <location>
        <begin position="8"/>
        <end position="21"/>
    </location>
</feature>
<comment type="function">
    <text evidence="1">Encapsidates the negative strand viral RNA, protecting it from nucleases. The encapsidated genomic RNA is termed the ribonucleoprotein (RNP) and serves as template for transcription and replication. The RNP needs to be localized in the host nucleus to start an infectious cycle, but is too large to diffuse through the nuclear pore complex. NP comprises at least 2 nuclear localization signals that are responsible for the active RNP import into the nucleus through cellular importin alpha/beta pathway. Later in the infection, nclear export of RNPs are mediated through viral proteins NEP interacting with M1 which binds nucleoproteins. It is possible that nucleoprotein binds directly host exportin-1/XPO1 and plays an active role in RNPs nuclear export. M1 interaction with RNP seems to hide nucleoprotein's nuclear localization signals. Soon after a virion infects a new cell, M1 dissociates from the RNP under acidification of the virion driven by M2 protein. Dissociation of M1 from RNP unmasks nucleoprotein's nuclear localization signals, targeting the RNP to the nucleus.</text>
</comment>
<comment type="subunit">
    <text evidence="1">Homomultimerizes to form the nucleocapsid. May bind host exportin-1/XPO1. Binds to viral genomic RNA. Protein-RNA contacts are mediated by a combination of electrostatic interactions between positively charged residues and the phosphate backbone and planar interactions between aromatic side chains and bases.</text>
</comment>
<comment type="subcellular location">
    <subcellularLocation>
        <location evidence="1">Virion</location>
    </subcellularLocation>
    <subcellularLocation>
        <location evidence="1">Host nucleus</location>
    </subcellularLocation>
</comment>
<comment type="PTM">
    <text evidence="1">Late in virus-infected cells, may be cleaved from a 56-kDa protein to a 53-kDa protein by a cellular caspase. This cleavage might be a marker for the onset of apoptosis in infected cells or have a specific function in virus host interaction.</text>
</comment>
<comment type="similarity">
    <text evidence="1">Belongs to the influenza viruses nucleoprotein family.</text>
</comment>
<proteinExistence type="inferred from homology"/>
<organism>
    <name type="scientific">Influenza A virus (strain A/Kitakyushu/159/1993 H3N2)</name>
    <dbReference type="NCBI Taxonomy" id="62478"/>
    <lineage>
        <taxon>Viruses</taxon>
        <taxon>Riboviria</taxon>
        <taxon>Orthornavirae</taxon>
        <taxon>Negarnaviricota</taxon>
        <taxon>Polyploviricotina</taxon>
        <taxon>Insthoviricetes</taxon>
        <taxon>Articulavirales</taxon>
        <taxon>Orthomyxoviridae</taxon>
        <taxon>Alphainfluenzavirus</taxon>
        <taxon>Alphainfluenzavirus influenzae</taxon>
        <taxon>Influenza A virus</taxon>
    </lineage>
</organism>
<name>NCAP_I93A0</name>
<protein>
    <recommendedName>
        <fullName evidence="1">Nucleoprotein</fullName>
    </recommendedName>
    <alternativeName>
        <fullName evidence="1">Nucleocapsid protein</fullName>
        <shortName evidence="1">Protein N</shortName>
    </alternativeName>
</protein>
<accession>O91743</accession>
<evidence type="ECO:0000255" key="1">
    <source>
        <dbReference type="HAMAP-Rule" id="MF_04070"/>
    </source>
</evidence>
<evidence type="ECO:0000256" key="2">
    <source>
        <dbReference type="SAM" id="MobiDB-lite"/>
    </source>
</evidence>
<keyword id="KW-0167">Capsid protein</keyword>
<keyword id="KW-1139">Helical capsid protein</keyword>
<keyword id="KW-1048">Host nucleus</keyword>
<keyword id="KW-0945">Host-virus interaction</keyword>
<keyword id="KW-0687">Ribonucleoprotein</keyword>
<keyword id="KW-0694">RNA-binding</keyword>
<keyword id="KW-0543">Viral nucleoprotein</keyword>
<keyword id="KW-1163">Viral penetration into host nucleus</keyword>
<keyword id="KW-0946">Virion</keyword>
<keyword id="KW-1160">Virus entry into host cell</keyword>
<sequence length="498" mass="56211">MASQGTKRSYEQMETDGERQNATEIRASVGKMIDGIGRFYIQMCTELKLSDYEGRLIQNSLTIERMVLSAFDERRNRYLEEHPSAGKDPKKTGGPIYKRVDGRWMRELVLYDKEEIRRIWRQANNGDDATAGLTHMMIWHSNLNDTTYQRTRALVRTGMDPRMCSLMQGSTLPRRSGAAGAAVKGIGTMVMELIRMIKRGINDRNFWRGENGRKTRSAYERMCNILKGKFQTAAQRAMMDQVRESRNPGNAEIEDLIFSARSALILRGSVAHKSCLPACVYGPAVSSGYNFEKEGYSLVGIDPFKLLQNSQVYSLIRPNENPAHKSQLVWMACHSAAFEDLRLLSFIRGTKVSPRGKLSTRGVQIASNENMDNMESSTLELRSRYWAIRTRSGGNTNQQRASAGQISVQPTFSVQRNLPFEKSTVMAAFTGNTEGRTSDMRAEIIRMMEGAKPEEVSFRGRGVFELSDEKATNPIVPSFDMSNEGSYFFGDNAEEYDN</sequence>
<gene>
    <name evidence="1" type="primary">NP</name>
</gene>
<organismHost>
    <name type="scientific">Aves</name>
    <dbReference type="NCBI Taxonomy" id="8782"/>
</organismHost>
<organismHost>
    <name type="scientific">Homo sapiens</name>
    <name type="common">Human</name>
    <dbReference type="NCBI Taxonomy" id="9606"/>
</organismHost>
<organismHost>
    <name type="scientific">Phocidae</name>
    <name type="common">true seals</name>
    <dbReference type="NCBI Taxonomy" id="9709"/>
</organismHost>
<organismHost>
    <name type="scientific">Sus scrofa</name>
    <name type="common">Pig</name>
    <dbReference type="NCBI Taxonomy" id="9823"/>
</organismHost>
<reference key="1">
    <citation type="journal article" date="1998" name="J. Virol.">
        <title>Phylogenetic analysis of the entire genome of influenza A (H3N2) viruses from Japan: evidence for genetic reassortment of the six internal genes.</title>
        <authorList>
            <person name="Lindstrom S.E."/>
            <person name="Hiromoto Y."/>
            <person name="Nerome R."/>
            <person name="Omoe K."/>
            <person name="Sugita S."/>
            <person name="Yamazaki Y."/>
            <person name="Takahashi T."/>
            <person name="Nerome K."/>
        </authorList>
    </citation>
    <scope>NUCLEOTIDE SEQUENCE [GENOMIC RNA]</scope>
</reference>
<dbReference type="EMBL" id="AF038254">
    <property type="protein sequence ID" value="AAC63462.1"/>
    <property type="molecule type" value="Genomic_RNA"/>
</dbReference>
<dbReference type="SMR" id="O91743"/>
<dbReference type="GO" id="GO:0019029">
    <property type="term" value="C:helical viral capsid"/>
    <property type="evidence" value="ECO:0007669"/>
    <property type="project" value="UniProtKB-UniRule"/>
</dbReference>
<dbReference type="GO" id="GO:0043657">
    <property type="term" value="C:host cell"/>
    <property type="evidence" value="ECO:0007669"/>
    <property type="project" value="GOC"/>
</dbReference>
<dbReference type="GO" id="GO:0042025">
    <property type="term" value="C:host cell nucleus"/>
    <property type="evidence" value="ECO:0007669"/>
    <property type="project" value="UniProtKB-SubCell"/>
</dbReference>
<dbReference type="GO" id="GO:1990904">
    <property type="term" value="C:ribonucleoprotein complex"/>
    <property type="evidence" value="ECO:0007669"/>
    <property type="project" value="UniProtKB-KW"/>
</dbReference>
<dbReference type="GO" id="GO:0019013">
    <property type="term" value="C:viral nucleocapsid"/>
    <property type="evidence" value="ECO:0007669"/>
    <property type="project" value="UniProtKB-UniRule"/>
</dbReference>
<dbReference type="GO" id="GO:0003723">
    <property type="term" value="F:RNA binding"/>
    <property type="evidence" value="ECO:0007669"/>
    <property type="project" value="UniProtKB-UniRule"/>
</dbReference>
<dbReference type="GO" id="GO:0005198">
    <property type="term" value="F:structural molecule activity"/>
    <property type="evidence" value="ECO:0007669"/>
    <property type="project" value="UniProtKB-UniRule"/>
</dbReference>
<dbReference type="GO" id="GO:0046718">
    <property type="term" value="P:symbiont entry into host cell"/>
    <property type="evidence" value="ECO:0007669"/>
    <property type="project" value="UniProtKB-KW"/>
</dbReference>
<dbReference type="GO" id="GO:0075732">
    <property type="term" value="P:viral penetration into host nucleus"/>
    <property type="evidence" value="ECO:0007669"/>
    <property type="project" value="UniProtKB-UniRule"/>
</dbReference>
<dbReference type="HAMAP" id="MF_04070">
    <property type="entry name" value="INFV_NCAP"/>
    <property type="match status" value="1"/>
</dbReference>
<dbReference type="InterPro" id="IPR002141">
    <property type="entry name" value="Flu_NP"/>
</dbReference>
<dbReference type="Pfam" id="PF00506">
    <property type="entry name" value="Flu_NP"/>
    <property type="match status" value="1"/>
</dbReference>
<dbReference type="SUPFAM" id="SSF161003">
    <property type="entry name" value="flu NP-like"/>
    <property type="match status" value="1"/>
</dbReference>